<accession>B7M0J4</accession>
<comment type="function">
    <text evidence="1">Catalyzes the attachment of tyrosine to tRNA(Tyr) in a two-step reaction: tyrosine is first activated by ATP to form Tyr-AMP and then transferred to the acceptor end of tRNA(Tyr).</text>
</comment>
<comment type="catalytic activity">
    <reaction evidence="1">
        <text>tRNA(Tyr) + L-tyrosine + ATP = L-tyrosyl-tRNA(Tyr) + AMP + diphosphate + H(+)</text>
        <dbReference type="Rhea" id="RHEA:10220"/>
        <dbReference type="Rhea" id="RHEA-COMP:9706"/>
        <dbReference type="Rhea" id="RHEA-COMP:9707"/>
        <dbReference type="ChEBI" id="CHEBI:15378"/>
        <dbReference type="ChEBI" id="CHEBI:30616"/>
        <dbReference type="ChEBI" id="CHEBI:33019"/>
        <dbReference type="ChEBI" id="CHEBI:58315"/>
        <dbReference type="ChEBI" id="CHEBI:78442"/>
        <dbReference type="ChEBI" id="CHEBI:78536"/>
        <dbReference type="ChEBI" id="CHEBI:456215"/>
        <dbReference type="EC" id="6.1.1.1"/>
    </reaction>
</comment>
<comment type="subunit">
    <text evidence="1">Homodimer.</text>
</comment>
<comment type="subcellular location">
    <subcellularLocation>
        <location evidence="1">Cytoplasm</location>
    </subcellularLocation>
</comment>
<comment type="similarity">
    <text evidence="1">Belongs to the class-I aminoacyl-tRNA synthetase family. TyrS type 1 subfamily.</text>
</comment>
<gene>
    <name evidence="1" type="primary">tyrS</name>
    <name type="ordered locus">ECIAI1_1689</name>
</gene>
<sequence>MASSNLIKQLQERGLVAQVTDEEALAERLAQGPIALYCGFDPTADSLHLGHLVPLLCLKRFQQAGHKPVALVGGATGLIGDPSFKAAERKLNTEETVQEWVDKIRKQVAPFLDFDCGENSAIAANNYDWFGNMNVLTFLRDIGKHFSVNQMINKEAVKQRLNREDQGISFTEFSYNLLQGYDFACLNKQYGVVLQIGGSDQWGNITSGIDLTRRLHQNQVFGLTVPLITKADGTKFGKTEGGAVWLDPKKTSPYKFYQFWINTADADVYRFLKFFTFMSIEEINTLEEEDKNSGKAPRAQYVLAEQVTRLVHGEEGLQAAKRITECLFSGSLSALSEADFEQLAQDGVPMVEMEKGADLMQALVDSELQPSRGQARKTIASNAITINGEKQSDPEYFFKEEDRLFGRFTLLRRGKKNYCLICWK</sequence>
<name>SYY_ECO8A</name>
<reference key="1">
    <citation type="journal article" date="2009" name="PLoS Genet.">
        <title>Organised genome dynamics in the Escherichia coli species results in highly diverse adaptive paths.</title>
        <authorList>
            <person name="Touchon M."/>
            <person name="Hoede C."/>
            <person name="Tenaillon O."/>
            <person name="Barbe V."/>
            <person name="Baeriswyl S."/>
            <person name="Bidet P."/>
            <person name="Bingen E."/>
            <person name="Bonacorsi S."/>
            <person name="Bouchier C."/>
            <person name="Bouvet O."/>
            <person name="Calteau A."/>
            <person name="Chiapello H."/>
            <person name="Clermont O."/>
            <person name="Cruveiller S."/>
            <person name="Danchin A."/>
            <person name="Diard M."/>
            <person name="Dossat C."/>
            <person name="Karoui M.E."/>
            <person name="Frapy E."/>
            <person name="Garry L."/>
            <person name="Ghigo J.M."/>
            <person name="Gilles A.M."/>
            <person name="Johnson J."/>
            <person name="Le Bouguenec C."/>
            <person name="Lescat M."/>
            <person name="Mangenot S."/>
            <person name="Martinez-Jehanne V."/>
            <person name="Matic I."/>
            <person name="Nassif X."/>
            <person name="Oztas S."/>
            <person name="Petit M.A."/>
            <person name="Pichon C."/>
            <person name="Rouy Z."/>
            <person name="Ruf C.S."/>
            <person name="Schneider D."/>
            <person name="Tourret J."/>
            <person name="Vacherie B."/>
            <person name="Vallenet D."/>
            <person name="Medigue C."/>
            <person name="Rocha E.P.C."/>
            <person name="Denamur E."/>
        </authorList>
    </citation>
    <scope>NUCLEOTIDE SEQUENCE [LARGE SCALE GENOMIC DNA]</scope>
    <source>
        <strain>IAI1</strain>
    </source>
</reference>
<feature type="chain" id="PRO_1000189293" description="Tyrosine--tRNA ligase">
    <location>
        <begin position="1"/>
        <end position="424"/>
    </location>
</feature>
<feature type="domain" description="S4 RNA-binding" evidence="1">
    <location>
        <begin position="357"/>
        <end position="414"/>
    </location>
</feature>
<feature type="short sequence motif" description="'HIGH' region">
    <location>
        <begin position="42"/>
        <end position="51"/>
    </location>
</feature>
<feature type="short sequence motif" description="'KMSKS' region">
    <location>
        <begin position="235"/>
        <end position="239"/>
    </location>
</feature>
<feature type="binding site" evidence="1">
    <location>
        <position position="37"/>
    </location>
    <ligand>
        <name>L-tyrosine</name>
        <dbReference type="ChEBI" id="CHEBI:58315"/>
    </ligand>
</feature>
<feature type="binding site" evidence="1">
    <location>
        <position position="175"/>
    </location>
    <ligand>
        <name>L-tyrosine</name>
        <dbReference type="ChEBI" id="CHEBI:58315"/>
    </ligand>
</feature>
<feature type="binding site" evidence="1">
    <location>
        <position position="179"/>
    </location>
    <ligand>
        <name>L-tyrosine</name>
        <dbReference type="ChEBI" id="CHEBI:58315"/>
    </ligand>
</feature>
<feature type="binding site" evidence="1">
    <location>
        <position position="238"/>
    </location>
    <ligand>
        <name>ATP</name>
        <dbReference type="ChEBI" id="CHEBI:30616"/>
    </ligand>
</feature>
<feature type="modified residue" description="N6-acetyllysine" evidence="1">
    <location>
        <position position="144"/>
    </location>
</feature>
<protein>
    <recommendedName>
        <fullName evidence="1">Tyrosine--tRNA ligase</fullName>
        <ecNumber evidence="1">6.1.1.1</ecNumber>
    </recommendedName>
    <alternativeName>
        <fullName evidence="1">Tyrosyl-tRNA synthetase</fullName>
        <shortName evidence="1">TyrRS</shortName>
    </alternativeName>
</protein>
<dbReference type="EC" id="6.1.1.1" evidence="1"/>
<dbReference type="EMBL" id="CU928160">
    <property type="protein sequence ID" value="CAQ98546.1"/>
    <property type="molecule type" value="Genomic_DNA"/>
</dbReference>
<dbReference type="RefSeq" id="WP_000168638.1">
    <property type="nucleotide sequence ID" value="NC_011741.1"/>
</dbReference>
<dbReference type="SMR" id="B7M0J4"/>
<dbReference type="KEGG" id="ecr:ECIAI1_1689"/>
<dbReference type="HOGENOM" id="CLU_024003_0_3_6"/>
<dbReference type="GO" id="GO:0005829">
    <property type="term" value="C:cytosol"/>
    <property type="evidence" value="ECO:0007669"/>
    <property type="project" value="TreeGrafter"/>
</dbReference>
<dbReference type="GO" id="GO:0005524">
    <property type="term" value="F:ATP binding"/>
    <property type="evidence" value="ECO:0007669"/>
    <property type="project" value="UniProtKB-UniRule"/>
</dbReference>
<dbReference type="GO" id="GO:0003723">
    <property type="term" value="F:RNA binding"/>
    <property type="evidence" value="ECO:0007669"/>
    <property type="project" value="UniProtKB-KW"/>
</dbReference>
<dbReference type="GO" id="GO:0004831">
    <property type="term" value="F:tyrosine-tRNA ligase activity"/>
    <property type="evidence" value="ECO:0007669"/>
    <property type="project" value="UniProtKB-UniRule"/>
</dbReference>
<dbReference type="GO" id="GO:0006437">
    <property type="term" value="P:tyrosyl-tRNA aminoacylation"/>
    <property type="evidence" value="ECO:0007669"/>
    <property type="project" value="UniProtKB-UniRule"/>
</dbReference>
<dbReference type="CDD" id="cd00165">
    <property type="entry name" value="S4"/>
    <property type="match status" value="1"/>
</dbReference>
<dbReference type="CDD" id="cd00805">
    <property type="entry name" value="TyrRS_core"/>
    <property type="match status" value="1"/>
</dbReference>
<dbReference type="FunFam" id="1.10.240.10:FF:000001">
    <property type="entry name" value="Tyrosine--tRNA ligase"/>
    <property type="match status" value="1"/>
</dbReference>
<dbReference type="FunFam" id="3.10.290.10:FF:000007">
    <property type="entry name" value="Tyrosine--tRNA ligase"/>
    <property type="match status" value="1"/>
</dbReference>
<dbReference type="FunFam" id="3.40.50.620:FF:000008">
    <property type="entry name" value="Tyrosine--tRNA ligase"/>
    <property type="match status" value="1"/>
</dbReference>
<dbReference type="Gene3D" id="3.40.50.620">
    <property type="entry name" value="HUPs"/>
    <property type="match status" value="1"/>
</dbReference>
<dbReference type="Gene3D" id="3.10.290.10">
    <property type="entry name" value="RNA-binding S4 domain"/>
    <property type="match status" value="1"/>
</dbReference>
<dbReference type="Gene3D" id="1.10.240.10">
    <property type="entry name" value="Tyrosyl-Transfer RNA Synthetase"/>
    <property type="match status" value="1"/>
</dbReference>
<dbReference type="HAMAP" id="MF_02006">
    <property type="entry name" value="Tyr_tRNA_synth_type1"/>
    <property type="match status" value="1"/>
</dbReference>
<dbReference type="InterPro" id="IPR001412">
    <property type="entry name" value="aa-tRNA-synth_I_CS"/>
</dbReference>
<dbReference type="InterPro" id="IPR002305">
    <property type="entry name" value="aa-tRNA-synth_Ic"/>
</dbReference>
<dbReference type="InterPro" id="IPR014729">
    <property type="entry name" value="Rossmann-like_a/b/a_fold"/>
</dbReference>
<dbReference type="InterPro" id="IPR002942">
    <property type="entry name" value="S4_RNA-bd"/>
</dbReference>
<dbReference type="InterPro" id="IPR036986">
    <property type="entry name" value="S4_RNA-bd_sf"/>
</dbReference>
<dbReference type="InterPro" id="IPR054608">
    <property type="entry name" value="SYY-like_C"/>
</dbReference>
<dbReference type="InterPro" id="IPR002307">
    <property type="entry name" value="Tyr-tRNA-ligase"/>
</dbReference>
<dbReference type="InterPro" id="IPR024088">
    <property type="entry name" value="Tyr-tRNA-ligase_bac-type"/>
</dbReference>
<dbReference type="InterPro" id="IPR024107">
    <property type="entry name" value="Tyr-tRNA-ligase_bac_1"/>
</dbReference>
<dbReference type="NCBIfam" id="TIGR00234">
    <property type="entry name" value="tyrS"/>
    <property type="match status" value="1"/>
</dbReference>
<dbReference type="PANTHER" id="PTHR11766:SF0">
    <property type="entry name" value="TYROSINE--TRNA LIGASE, MITOCHONDRIAL"/>
    <property type="match status" value="1"/>
</dbReference>
<dbReference type="PANTHER" id="PTHR11766">
    <property type="entry name" value="TYROSYL-TRNA SYNTHETASE"/>
    <property type="match status" value="1"/>
</dbReference>
<dbReference type="Pfam" id="PF22421">
    <property type="entry name" value="SYY_C-terminal"/>
    <property type="match status" value="1"/>
</dbReference>
<dbReference type="Pfam" id="PF00579">
    <property type="entry name" value="tRNA-synt_1b"/>
    <property type="match status" value="1"/>
</dbReference>
<dbReference type="PRINTS" id="PR01040">
    <property type="entry name" value="TRNASYNTHTYR"/>
</dbReference>
<dbReference type="SMART" id="SM00363">
    <property type="entry name" value="S4"/>
    <property type="match status" value="1"/>
</dbReference>
<dbReference type="SUPFAM" id="SSF55174">
    <property type="entry name" value="Alpha-L RNA-binding motif"/>
    <property type="match status" value="1"/>
</dbReference>
<dbReference type="SUPFAM" id="SSF52374">
    <property type="entry name" value="Nucleotidylyl transferase"/>
    <property type="match status" value="1"/>
</dbReference>
<dbReference type="PROSITE" id="PS00178">
    <property type="entry name" value="AA_TRNA_LIGASE_I"/>
    <property type="match status" value="1"/>
</dbReference>
<dbReference type="PROSITE" id="PS50889">
    <property type="entry name" value="S4"/>
    <property type="match status" value="1"/>
</dbReference>
<organism>
    <name type="scientific">Escherichia coli O8 (strain IAI1)</name>
    <dbReference type="NCBI Taxonomy" id="585034"/>
    <lineage>
        <taxon>Bacteria</taxon>
        <taxon>Pseudomonadati</taxon>
        <taxon>Pseudomonadota</taxon>
        <taxon>Gammaproteobacteria</taxon>
        <taxon>Enterobacterales</taxon>
        <taxon>Enterobacteriaceae</taxon>
        <taxon>Escherichia</taxon>
    </lineage>
</organism>
<keyword id="KW-0007">Acetylation</keyword>
<keyword id="KW-0030">Aminoacyl-tRNA synthetase</keyword>
<keyword id="KW-0067">ATP-binding</keyword>
<keyword id="KW-0963">Cytoplasm</keyword>
<keyword id="KW-0436">Ligase</keyword>
<keyword id="KW-0547">Nucleotide-binding</keyword>
<keyword id="KW-0648">Protein biosynthesis</keyword>
<keyword id="KW-0694">RNA-binding</keyword>
<proteinExistence type="inferred from homology"/>
<evidence type="ECO:0000255" key="1">
    <source>
        <dbReference type="HAMAP-Rule" id="MF_02006"/>
    </source>
</evidence>